<dbReference type="EMBL" id="AB029801">
    <property type="protein sequence ID" value="BAA83308.1"/>
    <property type="molecule type" value="Genomic_DNA"/>
</dbReference>
<dbReference type="GO" id="GO:0009507">
    <property type="term" value="C:chloroplast"/>
    <property type="evidence" value="ECO:0007669"/>
    <property type="project" value="UniProtKB-SubCell"/>
</dbReference>
<dbReference type="GO" id="GO:0003723">
    <property type="term" value="F:RNA binding"/>
    <property type="evidence" value="ECO:0007669"/>
    <property type="project" value="UniProtKB-KW"/>
</dbReference>
<dbReference type="GO" id="GO:0006397">
    <property type="term" value="P:mRNA processing"/>
    <property type="evidence" value="ECO:0007669"/>
    <property type="project" value="UniProtKB-KW"/>
</dbReference>
<dbReference type="GO" id="GO:0008380">
    <property type="term" value="P:RNA splicing"/>
    <property type="evidence" value="ECO:0007669"/>
    <property type="project" value="UniProtKB-UniRule"/>
</dbReference>
<dbReference type="GO" id="GO:0008033">
    <property type="term" value="P:tRNA processing"/>
    <property type="evidence" value="ECO:0007669"/>
    <property type="project" value="UniProtKB-KW"/>
</dbReference>
<dbReference type="HAMAP" id="MF_01390">
    <property type="entry name" value="MatK"/>
    <property type="match status" value="1"/>
</dbReference>
<dbReference type="InterPro" id="IPR024937">
    <property type="entry name" value="Domain_X"/>
</dbReference>
<dbReference type="InterPro" id="IPR002866">
    <property type="entry name" value="Maturase_MatK"/>
</dbReference>
<dbReference type="InterPro" id="IPR024942">
    <property type="entry name" value="Maturase_MatK_N"/>
</dbReference>
<dbReference type="PANTHER" id="PTHR34811">
    <property type="entry name" value="MATURASE K"/>
    <property type="match status" value="1"/>
</dbReference>
<dbReference type="PANTHER" id="PTHR34811:SF1">
    <property type="entry name" value="MATURASE K"/>
    <property type="match status" value="1"/>
</dbReference>
<dbReference type="Pfam" id="PF01348">
    <property type="entry name" value="Intron_maturas2"/>
    <property type="match status" value="1"/>
</dbReference>
<dbReference type="Pfam" id="PF01824">
    <property type="entry name" value="MatK_N"/>
    <property type="match status" value="1"/>
</dbReference>
<sequence length="520" mass="62619">MEELQGYLEKDRSRQQHFLYPLLFQEYIYALAHNHGVNGSIFYEPVEVFGYDNKSSLVLVKRLITRIYQQNYLISLVNDSNQNRFVEYNHNNFFXSHFHSQMISESFAIIVEIPFSLRLVSYFEEKEIPKYHNLRSIHSIFPFLEDKLSHLNYVSDILIPHPIHMEILVQILQCWIQDVPFLHLLRFFLHEYHNLNSLLITQKKSIYVFSKENKRVFRFLYNFYVFEWEFLFVFIRKQSSYLRLTSSGTFLERTHFYEKIEHLKIEHFVVVCRNFFQRTLWFCKDPFMHYVRYQGKAILASKGTHLLMKKWKYLFFNFWQYYFHVWSQPYRIHINQLSNYSFYFLGYLSSLLLHFSAVRNQMLKNSFLIDTITKKFDTIVPVIFLIGSLAKAKFCTVSGHPISKPIWTDLSDSDILDRFGRICRNLSHYHSGSSKKQSLYRIKYILRLSCARTLARKHKSTVRTFLRRSGSGLLEEFFTEEEQVLSLIFPKTTPFILHGSHRERIWYLDIIRINDLVNHS</sequence>
<evidence type="ECO:0000255" key="1">
    <source>
        <dbReference type="HAMAP-Rule" id="MF_01390"/>
    </source>
</evidence>
<proteinExistence type="inferred from homology"/>
<gene>
    <name evidence="1" type="primary">matK</name>
</gene>
<geneLocation type="chloroplast"/>
<comment type="function">
    <text evidence="1">Usually encoded in the trnK tRNA gene intron. Probably assists in splicing its own and other chloroplast group II introns.</text>
</comment>
<comment type="subcellular location">
    <subcellularLocation>
        <location>Plastid</location>
        <location>Chloroplast</location>
    </subcellularLocation>
</comment>
<comment type="similarity">
    <text evidence="1">Belongs to the intron maturase 2 family. MatK subfamily.</text>
</comment>
<protein>
    <recommendedName>
        <fullName evidence="1">Maturase K</fullName>
    </recommendedName>
    <alternativeName>
        <fullName evidence="1">Intron maturase</fullName>
    </alternativeName>
</protein>
<accession>Q9TN87</accession>
<reference key="1">
    <citation type="book" date="2000" name="Monocots: systematics and evolution">
        <title>Molecular phylogeny of the Convallariaceae (Asparagales).</title>
        <editorList>
            <person name="Wilson K.L."/>
            <person name="Morrison D.A."/>
        </editorList>
        <authorList>
            <person name="Yamashita J."/>
            <person name="Tamura M.N."/>
        </authorList>
    </citation>
    <scope>NUCLEOTIDE SEQUENCE [GENOMIC DNA]</scope>
</reference>
<feature type="chain" id="PRO_0000143694" description="Maturase K">
    <location>
        <begin position="1"/>
        <end position="520"/>
    </location>
</feature>
<name>MATK_RUSAC</name>
<organism>
    <name type="scientific">Ruscus aculeatus</name>
    <name type="common">Butcher's broom</name>
    <dbReference type="NCBI Taxonomy" id="59067"/>
    <lineage>
        <taxon>Eukaryota</taxon>
        <taxon>Viridiplantae</taxon>
        <taxon>Streptophyta</taxon>
        <taxon>Embryophyta</taxon>
        <taxon>Tracheophyta</taxon>
        <taxon>Spermatophyta</taxon>
        <taxon>Magnoliopsida</taxon>
        <taxon>Liliopsida</taxon>
        <taxon>Asparagales</taxon>
        <taxon>Asparagaceae</taxon>
        <taxon>Nolinoideae</taxon>
        <taxon>Ruscus</taxon>
    </lineage>
</organism>
<keyword id="KW-0150">Chloroplast</keyword>
<keyword id="KW-0507">mRNA processing</keyword>
<keyword id="KW-0934">Plastid</keyword>
<keyword id="KW-0694">RNA-binding</keyword>
<keyword id="KW-0819">tRNA processing</keyword>